<organism>
    <name type="scientific">Oryza sativa subsp. japonica</name>
    <name type="common">Rice</name>
    <dbReference type="NCBI Taxonomy" id="39947"/>
    <lineage>
        <taxon>Eukaryota</taxon>
        <taxon>Viridiplantae</taxon>
        <taxon>Streptophyta</taxon>
        <taxon>Embryophyta</taxon>
        <taxon>Tracheophyta</taxon>
        <taxon>Spermatophyta</taxon>
        <taxon>Magnoliopsida</taxon>
        <taxon>Liliopsida</taxon>
        <taxon>Poales</taxon>
        <taxon>Poaceae</taxon>
        <taxon>BOP clade</taxon>
        <taxon>Oryzoideae</taxon>
        <taxon>Oryzeae</taxon>
        <taxon>Oryzinae</taxon>
        <taxon>Oryza</taxon>
        <taxon>Oryza sativa</taxon>
    </lineage>
</organism>
<dbReference type="EC" id="2.7.11.1"/>
<dbReference type="EMBL" id="DP000011">
    <property type="protein sequence ID" value="ABA99814.2"/>
    <property type="molecule type" value="Genomic_DNA"/>
</dbReference>
<dbReference type="EMBL" id="AP008218">
    <property type="protein sequence ID" value="BAF30233.1"/>
    <property type="status" value="ALT_SEQ"/>
    <property type="molecule type" value="Genomic_DNA"/>
</dbReference>
<dbReference type="EMBL" id="AP014968">
    <property type="status" value="NOT_ANNOTATED_CDS"/>
    <property type="molecule type" value="Genomic_DNA"/>
</dbReference>
<dbReference type="SMR" id="Q2QMI0"/>
<dbReference type="FunCoup" id="Q2QMI0">
    <property type="interactions" value="62"/>
</dbReference>
<dbReference type="STRING" id="39947.Q2QMI0"/>
<dbReference type="PaxDb" id="39947-Q2QMI0"/>
<dbReference type="KEGG" id="dosa:Os12g0603700"/>
<dbReference type="KEGG" id="osa:4352728"/>
<dbReference type="InParanoid" id="Q2QMI0"/>
<dbReference type="OrthoDB" id="193931at2759"/>
<dbReference type="Proteomes" id="UP000000763">
    <property type="component" value="Chromosome 12"/>
</dbReference>
<dbReference type="Proteomes" id="UP000059680">
    <property type="component" value="Chromosome 12"/>
</dbReference>
<dbReference type="GO" id="GO:0005524">
    <property type="term" value="F:ATP binding"/>
    <property type="evidence" value="ECO:0007669"/>
    <property type="project" value="UniProtKB-KW"/>
</dbReference>
<dbReference type="GO" id="GO:0106310">
    <property type="term" value="F:protein serine kinase activity"/>
    <property type="evidence" value="ECO:0007669"/>
    <property type="project" value="RHEA"/>
</dbReference>
<dbReference type="GO" id="GO:0004674">
    <property type="term" value="F:protein serine/threonine kinase activity"/>
    <property type="evidence" value="ECO:0000318"/>
    <property type="project" value="GO_Central"/>
</dbReference>
<dbReference type="GO" id="GO:0007165">
    <property type="term" value="P:signal transduction"/>
    <property type="evidence" value="ECO:0007669"/>
    <property type="project" value="InterPro"/>
</dbReference>
<dbReference type="CDD" id="cd12195">
    <property type="entry name" value="CIPK_C"/>
    <property type="match status" value="1"/>
</dbReference>
<dbReference type="FunFam" id="3.30.200.20:FF:000042">
    <property type="entry name" value="Aurora kinase A"/>
    <property type="match status" value="1"/>
</dbReference>
<dbReference type="FunFam" id="1.10.510.10:FF:000653">
    <property type="entry name" value="Non-specific serine/threonine protein kinase"/>
    <property type="match status" value="1"/>
</dbReference>
<dbReference type="FunFam" id="3.30.310.80:FF:000016">
    <property type="entry name" value="Non-specific serine/threonine protein kinase"/>
    <property type="match status" value="1"/>
</dbReference>
<dbReference type="Gene3D" id="3.30.310.80">
    <property type="entry name" value="Kinase associated domain 1, KA1"/>
    <property type="match status" value="1"/>
</dbReference>
<dbReference type="Gene3D" id="1.10.510.10">
    <property type="entry name" value="Transferase(Phosphotransferase) domain 1"/>
    <property type="match status" value="1"/>
</dbReference>
<dbReference type="InterPro" id="IPR011009">
    <property type="entry name" value="Kinase-like_dom_sf"/>
</dbReference>
<dbReference type="InterPro" id="IPR018451">
    <property type="entry name" value="NAF/FISL_domain"/>
</dbReference>
<dbReference type="InterPro" id="IPR004041">
    <property type="entry name" value="NAF_dom"/>
</dbReference>
<dbReference type="InterPro" id="IPR000719">
    <property type="entry name" value="Prot_kinase_dom"/>
</dbReference>
<dbReference type="InterPro" id="IPR017441">
    <property type="entry name" value="Protein_kinase_ATP_BS"/>
</dbReference>
<dbReference type="InterPro" id="IPR008271">
    <property type="entry name" value="Ser/Thr_kinase_AS"/>
</dbReference>
<dbReference type="PANTHER" id="PTHR43895">
    <property type="entry name" value="CALCIUM/CALMODULIN-DEPENDENT PROTEIN KINASE KINASE-RELATED"/>
    <property type="match status" value="1"/>
</dbReference>
<dbReference type="PANTHER" id="PTHR43895:SF33">
    <property type="entry name" value="PROTEIN KINASE DOMAIN-CONTAINING PROTEIN"/>
    <property type="match status" value="1"/>
</dbReference>
<dbReference type="Pfam" id="PF03822">
    <property type="entry name" value="NAF"/>
    <property type="match status" value="1"/>
</dbReference>
<dbReference type="Pfam" id="PF00069">
    <property type="entry name" value="Pkinase"/>
    <property type="match status" value="1"/>
</dbReference>
<dbReference type="SMART" id="SM00220">
    <property type="entry name" value="S_TKc"/>
    <property type="match status" value="1"/>
</dbReference>
<dbReference type="SUPFAM" id="SSF56112">
    <property type="entry name" value="Protein kinase-like (PK-like)"/>
    <property type="match status" value="1"/>
</dbReference>
<dbReference type="PROSITE" id="PS50816">
    <property type="entry name" value="NAF"/>
    <property type="match status" value="1"/>
</dbReference>
<dbReference type="PROSITE" id="PS00107">
    <property type="entry name" value="PROTEIN_KINASE_ATP"/>
    <property type="match status" value="1"/>
</dbReference>
<dbReference type="PROSITE" id="PS50011">
    <property type="entry name" value="PROTEIN_KINASE_DOM"/>
    <property type="match status" value="1"/>
</dbReference>
<dbReference type="PROSITE" id="PS00108">
    <property type="entry name" value="PROTEIN_KINASE_ST"/>
    <property type="match status" value="1"/>
</dbReference>
<reference key="1">
    <citation type="journal article" date="2005" name="BMC Biol.">
        <title>The sequence of rice chromosomes 11 and 12, rich in disease resistance genes and recent gene duplications.</title>
        <authorList>
            <consortium name="The rice chromosomes 11 and 12 sequencing consortia"/>
        </authorList>
    </citation>
    <scope>NUCLEOTIDE SEQUENCE [LARGE SCALE GENOMIC DNA]</scope>
    <source>
        <strain>cv. Nipponbare</strain>
    </source>
</reference>
<reference key="2">
    <citation type="journal article" date="2005" name="Nature">
        <title>The map-based sequence of the rice genome.</title>
        <authorList>
            <consortium name="International rice genome sequencing project (IRGSP)"/>
        </authorList>
    </citation>
    <scope>NUCLEOTIDE SEQUENCE [LARGE SCALE GENOMIC DNA]</scope>
    <source>
        <strain>cv. Nipponbare</strain>
    </source>
</reference>
<reference key="3">
    <citation type="journal article" date="2008" name="Nucleic Acids Res.">
        <title>The rice annotation project database (RAP-DB): 2008 update.</title>
        <authorList>
            <consortium name="The rice annotation project (RAP)"/>
        </authorList>
    </citation>
    <scope>GENOME REANNOTATION</scope>
    <source>
        <strain>cv. Nipponbare</strain>
    </source>
</reference>
<reference key="4">
    <citation type="journal article" date="2013" name="Rice">
        <title>Improvement of the Oryza sativa Nipponbare reference genome using next generation sequence and optical map data.</title>
        <authorList>
            <person name="Kawahara Y."/>
            <person name="de la Bastide M."/>
            <person name="Hamilton J.P."/>
            <person name="Kanamori H."/>
            <person name="McCombie W.R."/>
            <person name="Ouyang S."/>
            <person name="Schwartz D.C."/>
            <person name="Tanaka T."/>
            <person name="Wu J."/>
            <person name="Zhou S."/>
            <person name="Childs K.L."/>
            <person name="Davidson R.M."/>
            <person name="Lin H."/>
            <person name="Quesada-Ocampo L."/>
            <person name="Vaillancourt B."/>
            <person name="Sakai H."/>
            <person name="Lee S.S."/>
            <person name="Kim J."/>
            <person name="Numa H."/>
            <person name="Itoh T."/>
            <person name="Buell C.R."/>
            <person name="Matsumoto T."/>
        </authorList>
    </citation>
    <scope>GENOME REANNOTATION</scope>
    <source>
        <strain>cv. Nipponbare</strain>
    </source>
</reference>
<reference key="5">
    <citation type="journal article" date="2004" name="Plant Physiol.">
        <title>Calcium sensors and their interacting protein kinases: genomics of the Arabidopsis and rice CBL-CIPK signaling networks.</title>
        <authorList>
            <person name="Kolukisaoglu U."/>
            <person name="Weinl S."/>
            <person name="Blazevic D."/>
            <person name="Batistic O."/>
            <person name="Kudla J."/>
        </authorList>
    </citation>
    <scope>GENE FAMILY</scope>
    <scope>NOMENCLATURE</scope>
</reference>
<reference key="6">
    <citation type="journal article" date="2007" name="Plant Physiol.">
        <title>Characterization of stress-responsive CIPK genes in rice for stress tolerance improvement.</title>
        <authorList>
            <person name="Xiang Y."/>
            <person name="Huang Y."/>
            <person name="Xiong L."/>
        </authorList>
    </citation>
    <scope>INDUCTION</scope>
</reference>
<sequence>MAMAAMDARKKKSGGGGGEPLLGKYELGRMLGRGTFAKVYLARAVAGGEAVAVKVIDKAEVMGTAGMAPRVLREVAAMRRLRHPHVLRLHEVLATRARIYLVMELATGGDLLSRLAALPRRRLPESAARRVFVQLVDALSYCHARGVAHRDVKPQNVLLDGDGNLKVSDFGLAALPDTLRDDGRLHTACGTPAYAAPEVLRRRAYDGAKADAWSCGVILFVLLAGHLPFDDSNIADMCRKAHRREYELPRWVSQPARRLVSRLLDPNPDTRVAVESLAAHHPWFKRSLSVDSQLDGLLNGEPERAVAFQAAPPPPLNAFDIISMSPGLDLSGLFGEHDKSLREKRFTTTASPEKTLEQLGLAGGKLGYVVVVGKKGVECLPLAGGRLSSGIAAMSVEMSEVAPPLLLVELRLEVAAGDVDGGDGEVKGFGWEQLRMELGDVVRAWHSCEDLCEI</sequence>
<comment type="function">
    <text evidence="1">CIPK serine-threonine protein kinases interact with CBL proteins. Binding of a CBL protein to the regulatory NAF domain of CIPK protein lead to the activation of the kinase in a calcium-dependent manner (By similarity).</text>
</comment>
<comment type="catalytic activity">
    <reaction>
        <text>L-seryl-[protein] + ATP = O-phospho-L-seryl-[protein] + ADP + H(+)</text>
        <dbReference type="Rhea" id="RHEA:17989"/>
        <dbReference type="Rhea" id="RHEA-COMP:9863"/>
        <dbReference type="Rhea" id="RHEA-COMP:11604"/>
        <dbReference type="ChEBI" id="CHEBI:15378"/>
        <dbReference type="ChEBI" id="CHEBI:29999"/>
        <dbReference type="ChEBI" id="CHEBI:30616"/>
        <dbReference type="ChEBI" id="CHEBI:83421"/>
        <dbReference type="ChEBI" id="CHEBI:456216"/>
        <dbReference type="EC" id="2.7.11.1"/>
    </reaction>
</comment>
<comment type="catalytic activity">
    <reaction>
        <text>L-threonyl-[protein] + ATP = O-phospho-L-threonyl-[protein] + ADP + H(+)</text>
        <dbReference type="Rhea" id="RHEA:46608"/>
        <dbReference type="Rhea" id="RHEA-COMP:11060"/>
        <dbReference type="Rhea" id="RHEA-COMP:11605"/>
        <dbReference type="ChEBI" id="CHEBI:15378"/>
        <dbReference type="ChEBI" id="CHEBI:30013"/>
        <dbReference type="ChEBI" id="CHEBI:30616"/>
        <dbReference type="ChEBI" id="CHEBI:61977"/>
        <dbReference type="ChEBI" id="CHEBI:456216"/>
        <dbReference type="EC" id="2.7.11.1"/>
    </reaction>
</comment>
<comment type="cofactor">
    <cofactor evidence="1">
        <name>Mn(2+)</name>
        <dbReference type="ChEBI" id="CHEBI:29035"/>
    </cofactor>
</comment>
<comment type="induction">
    <text evidence="5">By salt stress.</text>
</comment>
<comment type="domain">
    <text evidence="1">The activation loop within the kinase domain is the target of phosphorylation/activation by upstream protein kinases. The PPI motif mediates the interaction with the ABI (abscisic acid-insensitive) phosphatases (By similarity).</text>
</comment>
<comment type="similarity">
    <text evidence="6">Belongs to the protein kinase superfamily. CAMK Ser/Thr protein kinase family. SNF1 subfamily.</text>
</comment>
<comment type="sequence caution" evidence="6">
    <conflict type="erroneous gene model prediction">
        <sequence resource="EMBL-CDS" id="BAF30233"/>
    </conflict>
</comment>
<keyword id="KW-0067">ATP-binding</keyword>
<keyword id="KW-0418">Kinase</keyword>
<keyword id="KW-0464">Manganese</keyword>
<keyword id="KW-0547">Nucleotide-binding</keyword>
<keyword id="KW-1185">Reference proteome</keyword>
<keyword id="KW-0723">Serine/threonine-protein kinase</keyword>
<keyword id="KW-0808">Transferase</keyword>
<name>CIPK4_ORYSJ</name>
<gene>
    <name type="primary">CIPK4</name>
    <name type="ordered locus">Os12g0603700</name>
    <name type="ordered locus">LOC_Os12g41090</name>
</gene>
<proteinExistence type="evidence at transcript level"/>
<protein>
    <recommendedName>
        <fullName>CBL-interacting protein kinase 4</fullName>
        <ecNumber>2.7.11.1</ecNumber>
    </recommendedName>
    <alternativeName>
        <fullName>OsCIPK04</fullName>
    </alternativeName>
</protein>
<accession>Q2QMI0</accession>
<accession>Q0IM32</accession>
<evidence type="ECO:0000250" key="1"/>
<evidence type="ECO:0000255" key="2">
    <source>
        <dbReference type="PROSITE-ProRule" id="PRU00159"/>
    </source>
</evidence>
<evidence type="ECO:0000255" key="3">
    <source>
        <dbReference type="PROSITE-ProRule" id="PRU00256"/>
    </source>
</evidence>
<evidence type="ECO:0000255" key="4">
    <source>
        <dbReference type="PROSITE-ProRule" id="PRU10027"/>
    </source>
</evidence>
<evidence type="ECO:0000269" key="5">
    <source>
    </source>
</evidence>
<evidence type="ECO:0000305" key="6"/>
<feature type="chain" id="PRO_0000338362" description="CBL-interacting protein kinase 4">
    <location>
        <begin position="1"/>
        <end position="454"/>
    </location>
</feature>
<feature type="domain" description="Protein kinase" evidence="2">
    <location>
        <begin position="25"/>
        <end position="284"/>
    </location>
</feature>
<feature type="domain" description="NAF" evidence="3">
    <location>
        <begin position="311"/>
        <end position="335"/>
    </location>
</feature>
<feature type="region of interest" description="Activation loop" evidence="1">
    <location>
        <begin position="169"/>
        <end position="198"/>
    </location>
</feature>
<feature type="region of interest" description="PPI" evidence="1">
    <location>
        <begin position="341"/>
        <end position="370"/>
    </location>
</feature>
<feature type="active site" description="Proton acceptor" evidence="2 4">
    <location>
        <position position="151"/>
    </location>
</feature>
<feature type="binding site" evidence="2">
    <location>
        <begin position="31"/>
        <end position="39"/>
    </location>
    <ligand>
        <name>ATP</name>
        <dbReference type="ChEBI" id="CHEBI:30616"/>
    </ligand>
</feature>
<feature type="binding site" evidence="2">
    <location>
        <position position="54"/>
    </location>
    <ligand>
        <name>ATP</name>
        <dbReference type="ChEBI" id="CHEBI:30616"/>
    </ligand>
</feature>